<feature type="transit peptide" description="Mitochondrion" evidence="1">
    <location>
        <begin position="1"/>
        <end position="17"/>
    </location>
</feature>
<feature type="chain" id="PRO_0000207581" description="Ubiquinone biosynthesis monooxygenase COQ6, mitochondrial">
    <location>
        <begin position="18"/>
        <end position="479"/>
    </location>
</feature>
<feature type="mutagenesis site" description="Accumulates ubiquinone biosynthesis intermediates lacking the C5-ring hydroxyl." evidence="6">
    <original>G</original>
    <variation>A</variation>
    <location>
        <position position="202"/>
    </location>
</feature>
<feature type="mutagenesis site" description="Abolishes catalytic activity; when associated with E-382." evidence="9">
    <original>G</original>
    <variation>R</variation>
    <location>
        <position position="248"/>
    </location>
</feature>
<feature type="mutagenesis site" description="Abolishes catalytic activity; when associated with R-248." evidence="9">
    <original>L</original>
    <variation>E</variation>
    <location>
        <position position="382"/>
    </location>
</feature>
<feature type="mutagenesis site" description="Accumulates ubiquinone biosynthesis intermediates lacking the C5-ring hydroxyl; when associated with D-388." evidence="6">
    <original>G</original>
    <variation>A</variation>
    <location>
        <position position="386"/>
    </location>
</feature>
<feature type="mutagenesis site" description="Accumulates ubiquinone biosynthesis intermediates lacking the C5-ring hydroxyl; when associated with A-386." evidence="6">
    <original>N</original>
    <variation>D</variation>
    <location>
        <position position="388"/>
    </location>
</feature>
<feature type="sequence conflict" description="In Ref. 5; CAA56704." evidence="12" ref="5">
    <original>V</original>
    <variation>I</variation>
    <location>
        <position position="60"/>
    </location>
</feature>
<feature type="sequence conflict" description="In Ref. 5; CAA56704." evidence="12" ref="5">
    <original>K</original>
    <variation>R</variation>
    <location>
        <position position="68"/>
    </location>
</feature>
<feature type="sequence conflict" description="In Ref. 5; CAA56705." evidence="12" ref="5">
    <original>K</original>
    <variation>E</variation>
    <location>
        <position position="313"/>
    </location>
</feature>
<organism>
    <name type="scientific">Saccharomyces cerevisiae (strain ATCC 204508 / S288c)</name>
    <name type="common">Baker's yeast</name>
    <dbReference type="NCBI Taxonomy" id="559292"/>
    <lineage>
        <taxon>Eukaryota</taxon>
        <taxon>Fungi</taxon>
        <taxon>Dikarya</taxon>
        <taxon>Ascomycota</taxon>
        <taxon>Saccharomycotina</taxon>
        <taxon>Saccharomycetes</taxon>
        <taxon>Saccharomycetales</taxon>
        <taxon>Saccharomycetaceae</taxon>
        <taxon>Saccharomyces</taxon>
    </lineage>
</organism>
<name>COQ6_YEAST</name>
<dbReference type="EC" id="1.14.15.45" evidence="1 6"/>
<dbReference type="EC" id="1.14.15.46" evidence="1"/>
<dbReference type="EC" id="3.5.-.-" evidence="8"/>
<dbReference type="EMBL" id="AF003698">
    <property type="protein sequence ID" value="AAB61341.1"/>
    <property type="molecule type" value="Genomic_DNA"/>
</dbReference>
<dbReference type="EMBL" id="X99228">
    <property type="protein sequence ID" value="CAA67617.1"/>
    <property type="molecule type" value="Genomic_DNA"/>
</dbReference>
<dbReference type="EMBL" id="Z73040">
    <property type="protein sequence ID" value="CAA97284.1"/>
    <property type="molecule type" value="Genomic_DNA"/>
</dbReference>
<dbReference type="EMBL" id="X80690">
    <property type="protein sequence ID" value="CAA56704.1"/>
    <property type="status" value="ALT_FRAME"/>
    <property type="molecule type" value="Genomic_DNA"/>
</dbReference>
<dbReference type="EMBL" id="X80690">
    <property type="protein sequence ID" value="CAA56705.1"/>
    <property type="molecule type" value="Genomic_DNA"/>
</dbReference>
<dbReference type="EMBL" id="BK006941">
    <property type="protein sequence ID" value="DAA08346.1"/>
    <property type="molecule type" value="Genomic_DNA"/>
</dbReference>
<dbReference type="PIR" id="S64587">
    <property type="entry name" value="S64587"/>
</dbReference>
<dbReference type="RefSeq" id="NP_011771.1">
    <property type="nucleotide sequence ID" value="NM_001181384.1"/>
</dbReference>
<dbReference type="SMR" id="P53318"/>
<dbReference type="BioGRID" id="33506">
    <property type="interactions" value="140"/>
</dbReference>
<dbReference type="ComplexPortal" id="CPX-1155">
    <property type="entry name" value="CoQ biosynthetic complex"/>
</dbReference>
<dbReference type="FunCoup" id="P53318">
    <property type="interactions" value="515"/>
</dbReference>
<dbReference type="IntAct" id="P53318">
    <property type="interactions" value="10"/>
</dbReference>
<dbReference type="MINT" id="P53318"/>
<dbReference type="STRING" id="4932.YGR255C"/>
<dbReference type="PaxDb" id="4932-YGR255C"/>
<dbReference type="PeptideAtlas" id="P53318"/>
<dbReference type="TopDownProteomics" id="P53318"/>
<dbReference type="EnsemblFungi" id="YGR255C_mRNA">
    <property type="protein sequence ID" value="YGR255C"/>
    <property type="gene ID" value="YGR255C"/>
</dbReference>
<dbReference type="GeneID" id="853170"/>
<dbReference type="KEGG" id="sce:YGR255C"/>
<dbReference type="AGR" id="SGD:S000003487"/>
<dbReference type="SGD" id="S000003487">
    <property type="gene designation" value="COQ6"/>
</dbReference>
<dbReference type="VEuPathDB" id="FungiDB:YGR255C"/>
<dbReference type="eggNOG" id="KOG3855">
    <property type="taxonomic scope" value="Eukaryota"/>
</dbReference>
<dbReference type="GeneTree" id="ENSGT00390000015152"/>
<dbReference type="HOGENOM" id="CLU_009665_8_0_1"/>
<dbReference type="InParanoid" id="P53318"/>
<dbReference type="OMA" id="VKQMQVW"/>
<dbReference type="OrthoDB" id="683240at2759"/>
<dbReference type="BioCyc" id="MetaCyc:YGR255C-MONOMER"/>
<dbReference type="BioCyc" id="YEAST:YGR255C-MONOMER"/>
<dbReference type="Reactome" id="R-SCE-2142789">
    <property type="pathway name" value="Ubiquinol biosynthesis"/>
</dbReference>
<dbReference type="UniPathway" id="UPA00232"/>
<dbReference type="BioGRID-ORCS" id="853170">
    <property type="hits" value="5 hits in 10 CRISPR screens"/>
</dbReference>
<dbReference type="PRO" id="PR:P53318"/>
<dbReference type="Proteomes" id="UP000002311">
    <property type="component" value="Chromosome VII"/>
</dbReference>
<dbReference type="RNAct" id="P53318">
    <property type="molecule type" value="protein"/>
</dbReference>
<dbReference type="GO" id="GO:0031314">
    <property type="term" value="C:extrinsic component of mitochondrial inner membrane"/>
    <property type="evidence" value="ECO:0007669"/>
    <property type="project" value="UniProtKB-UniRule"/>
</dbReference>
<dbReference type="GO" id="GO:0005743">
    <property type="term" value="C:mitochondrial inner membrane"/>
    <property type="evidence" value="ECO:0000314"/>
    <property type="project" value="SGD"/>
</dbReference>
<dbReference type="GO" id="GO:0005739">
    <property type="term" value="C:mitochondrion"/>
    <property type="evidence" value="ECO:0007005"/>
    <property type="project" value="SGD"/>
</dbReference>
<dbReference type="GO" id="GO:0008681">
    <property type="term" value="F:2-octaprenyl-6-methoxyphenol hydroxylase activity"/>
    <property type="evidence" value="ECO:0000247"/>
    <property type="project" value="SGD"/>
</dbReference>
<dbReference type="GO" id="GO:0106364">
    <property type="term" value="F:4-hydroxy-3-all-trans-polyprenylbenzoate oxygenase activity"/>
    <property type="evidence" value="ECO:0000315"/>
    <property type="project" value="FlyBase"/>
</dbReference>
<dbReference type="GO" id="GO:0071949">
    <property type="term" value="F:FAD binding"/>
    <property type="evidence" value="ECO:0007669"/>
    <property type="project" value="InterPro"/>
</dbReference>
<dbReference type="GO" id="GO:0016787">
    <property type="term" value="F:hydrolase activity"/>
    <property type="evidence" value="ECO:0007669"/>
    <property type="project" value="UniProtKB-KW"/>
</dbReference>
<dbReference type="GO" id="GO:0016491">
    <property type="term" value="F:oxidoreductase activity"/>
    <property type="evidence" value="ECO:0000318"/>
    <property type="project" value="GO_Central"/>
</dbReference>
<dbReference type="GO" id="GO:0016712">
    <property type="term" value="F:oxidoreductase activity, acting on paired donors, with incorporation or reduction of molecular oxygen, reduced flavin or flavoprotein as one donor, and incorporation of one atom of oxygen"/>
    <property type="evidence" value="ECO:0000315"/>
    <property type="project" value="SGD"/>
</dbReference>
<dbReference type="GO" id="GO:0006744">
    <property type="term" value="P:ubiquinone biosynthetic process"/>
    <property type="evidence" value="ECO:0000315"/>
    <property type="project" value="SGD"/>
</dbReference>
<dbReference type="FunFam" id="3.50.50.60:FF:000021">
    <property type="entry name" value="Ubiquinone biosynthesis monooxygenase COQ6"/>
    <property type="match status" value="1"/>
</dbReference>
<dbReference type="FunFam" id="3.50.50.60:FF:000239">
    <property type="entry name" value="Ubiquinone biosynthesis monooxygenase COQ6, mitochondrial"/>
    <property type="match status" value="1"/>
</dbReference>
<dbReference type="Gene3D" id="3.50.50.60">
    <property type="entry name" value="FAD/NAD(P)-binding domain"/>
    <property type="match status" value="2"/>
</dbReference>
<dbReference type="HAMAP" id="MF_03193">
    <property type="entry name" value="COQ6_monooxygenase"/>
    <property type="match status" value="1"/>
</dbReference>
<dbReference type="InterPro" id="IPR002938">
    <property type="entry name" value="FAD-bd"/>
</dbReference>
<dbReference type="InterPro" id="IPR036188">
    <property type="entry name" value="FAD/NAD-bd_sf"/>
</dbReference>
<dbReference type="InterPro" id="IPR018168">
    <property type="entry name" value="Ubi_Hdrlase_CS"/>
</dbReference>
<dbReference type="InterPro" id="IPR010971">
    <property type="entry name" value="UbiH/COQ6"/>
</dbReference>
<dbReference type="InterPro" id="IPR051205">
    <property type="entry name" value="UbiH/COQ6_monooxygenase"/>
</dbReference>
<dbReference type="InterPro" id="IPR000689">
    <property type="entry name" value="UbQ_mOase_COQ6"/>
</dbReference>
<dbReference type="NCBIfam" id="TIGR01989">
    <property type="entry name" value="COQ6"/>
    <property type="match status" value="1"/>
</dbReference>
<dbReference type="NCBIfam" id="TIGR01988">
    <property type="entry name" value="Ubi-OHases"/>
    <property type="match status" value="1"/>
</dbReference>
<dbReference type="PANTHER" id="PTHR43876">
    <property type="entry name" value="UBIQUINONE BIOSYNTHESIS MONOOXYGENASE COQ6, MITOCHONDRIAL"/>
    <property type="match status" value="1"/>
</dbReference>
<dbReference type="PANTHER" id="PTHR43876:SF7">
    <property type="entry name" value="UBIQUINONE BIOSYNTHESIS MONOOXYGENASE COQ6, MITOCHONDRIAL"/>
    <property type="match status" value="1"/>
</dbReference>
<dbReference type="Pfam" id="PF01494">
    <property type="entry name" value="FAD_binding_3"/>
    <property type="match status" value="1"/>
</dbReference>
<dbReference type="PRINTS" id="PR00420">
    <property type="entry name" value="RNGMNOXGNASE"/>
</dbReference>
<dbReference type="SUPFAM" id="SSF51905">
    <property type="entry name" value="FAD/NAD(P)-binding domain"/>
    <property type="match status" value="1"/>
</dbReference>
<dbReference type="PROSITE" id="PS01304">
    <property type="entry name" value="UBIH"/>
    <property type="match status" value="1"/>
</dbReference>
<protein>
    <recommendedName>
        <fullName evidence="1 13">Ubiquinone biosynthesis monooxygenase COQ6, mitochondrial</fullName>
        <ecNumber evidence="1 6">1.14.15.45</ecNumber>
    </recommendedName>
    <alternativeName>
        <fullName evidence="1">2-methoxy-6-polyprenolphenol 4-hydroxylase</fullName>
        <ecNumber evidence="1">1.14.15.46</ecNumber>
    </alternativeName>
    <alternativeName>
        <fullName evidence="11">Ubiquinone C4-deaminase</fullName>
        <ecNumber evidence="8">3.5.-.-</ecNumber>
    </alternativeName>
</protein>
<accession>P53318</accession>
<accession>D6VV35</accession>
<accession>Q05674</accession>
<accession>Q05675</accession>
<sequence length="479" mass="53527">MFFSKVMLTRRILVRGLATAKSSAPKLTDVLIVGGGPAGLTLAASIKNSPQLKDLKTTLVDMVDLKDKLSDFYNSPPDYFTNRIVSVTPRSIHFLENNAGATLMHDRIQSYDGLYVTDGCSKATLDLARDSMLCMIEIINIQASLYNRISQYDSKKDSIDIIDNTKVVNIKHSDPNDPLSWPLVTLSNGEVYKTRLLVGADGFNSPTRRFSQIPSRGWMYNAYGVVASMKLEYPPFKLRGWQRFLPTGPIAHLPMPENNATLVWSSSERLSRLLLSLPPESFTALINAAFVLEDADMNYYYRTLEDGSMDTDKLIEDIKFRTEEIYATLKDESDIDEIYPPRVVSIIDKTRARFPLKLTHADRYCTDRVALVGDAAHTTHPLAGQGLNMGQTDVHGLVYALEKAMERGLDIGSSLSLEPFWAERYPSNNVLLGMADKLFKLYHTNFPPVVALRTFGLNLTNKIGPVKNMIIDTLGGNEK</sequence>
<gene>
    <name evidence="1 10" type="primary">COQ6</name>
    <name evidence="16" type="ordered locus">YGR255C</name>
    <name type="ORF">G9165</name>
</gene>
<proteinExistence type="evidence at protein level"/>
<keyword id="KW-0274">FAD</keyword>
<keyword id="KW-0285">Flavoprotein</keyword>
<keyword id="KW-0378">Hydrolase</keyword>
<keyword id="KW-0472">Membrane</keyword>
<keyword id="KW-0496">Mitochondrion</keyword>
<keyword id="KW-0999">Mitochondrion inner membrane</keyword>
<keyword id="KW-0503">Monooxygenase</keyword>
<keyword id="KW-0560">Oxidoreductase</keyword>
<keyword id="KW-1185">Reference proteome</keyword>
<keyword id="KW-0809">Transit peptide</keyword>
<keyword id="KW-0831">Ubiquinone biosynthesis</keyword>
<reference key="1">
    <citation type="journal article" date="2003" name="J. Biol. Chem.">
        <title>The Saccharomyces cerevisiae COQ6 gene encodes a mitochondrial flavin-dependent monooxygenase required for coenzyme Q biosynthesis.</title>
        <authorList>
            <person name="Gin P."/>
            <person name="Hsu A.Y."/>
            <person name="Rothman S.C."/>
            <person name="Jonassen T."/>
            <person name="Lee P.T."/>
            <person name="Tzagoloff A."/>
            <person name="Clarke C.F."/>
        </authorList>
    </citation>
    <scope>NUCLEOTIDE SEQUENCE [GENOMIC DNA]</scope>
    <scope>SUBCELLULAR LOCATION</scope>
    <scope>COFACTOR</scope>
    <scope>PATHWAY</scope>
</reference>
<reference key="2">
    <citation type="journal article" date="1997" name="Yeast">
        <title>Sequence analysis of a 10.5 kb DNA fragment from the yeast chromosome VII reveals the presence of three new open reading frames and of a tRNAThr gene.</title>
        <authorList>
            <person name="Mazzoni C."/>
            <person name="Ruzzi M."/>
            <person name="Rinaldi T."/>
            <person name="Solinas F."/>
            <person name="Montebove F."/>
            <person name="Frontali L."/>
        </authorList>
    </citation>
    <scope>NUCLEOTIDE SEQUENCE [GENOMIC DNA]</scope>
    <source>
        <strain>ATCC 204508 / S288c</strain>
    </source>
</reference>
<reference key="3">
    <citation type="journal article" date="1997" name="Nature">
        <title>The nucleotide sequence of Saccharomyces cerevisiae chromosome VII.</title>
        <authorList>
            <person name="Tettelin H."/>
            <person name="Agostoni-Carbone M.L."/>
            <person name="Albermann K."/>
            <person name="Albers M."/>
            <person name="Arroyo J."/>
            <person name="Backes U."/>
            <person name="Barreiros T."/>
            <person name="Bertani I."/>
            <person name="Bjourson A.J."/>
            <person name="Brueckner M."/>
            <person name="Bruschi C.V."/>
            <person name="Carignani G."/>
            <person name="Castagnoli L."/>
            <person name="Cerdan E."/>
            <person name="Clemente M.L."/>
            <person name="Coblenz A."/>
            <person name="Coglievina M."/>
            <person name="Coissac E."/>
            <person name="Defoor E."/>
            <person name="Del Bino S."/>
            <person name="Delius H."/>
            <person name="Delneri D."/>
            <person name="de Wergifosse P."/>
            <person name="Dujon B."/>
            <person name="Durand P."/>
            <person name="Entian K.-D."/>
            <person name="Eraso P."/>
            <person name="Escribano V."/>
            <person name="Fabiani L."/>
            <person name="Fartmann B."/>
            <person name="Feroli F."/>
            <person name="Feuermann M."/>
            <person name="Frontali L."/>
            <person name="Garcia-Gonzalez M."/>
            <person name="Garcia-Saez M.I."/>
            <person name="Goffeau A."/>
            <person name="Guerreiro P."/>
            <person name="Hani J."/>
            <person name="Hansen M."/>
            <person name="Hebling U."/>
            <person name="Hernandez K."/>
            <person name="Heumann K."/>
            <person name="Hilger F."/>
            <person name="Hofmann B."/>
            <person name="Indge K.J."/>
            <person name="James C.M."/>
            <person name="Klima R."/>
            <person name="Koetter P."/>
            <person name="Kramer B."/>
            <person name="Kramer W."/>
            <person name="Lauquin G."/>
            <person name="Leuther H."/>
            <person name="Louis E.J."/>
            <person name="Maillier E."/>
            <person name="Marconi A."/>
            <person name="Martegani E."/>
            <person name="Mazon M.J."/>
            <person name="Mazzoni C."/>
            <person name="McReynolds A.D.K."/>
            <person name="Melchioretto P."/>
            <person name="Mewes H.-W."/>
            <person name="Minenkova O."/>
            <person name="Mueller-Auer S."/>
            <person name="Nawrocki A."/>
            <person name="Netter P."/>
            <person name="Neu R."/>
            <person name="Nombela C."/>
            <person name="Oliver S.G."/>
            <person name="Panzeri L."/>
            <person name="Paoluzi S."/>
            <person name="Plevani P."/>
            <person name="Portetelle D."/>
            <person name="Portillo F."/>
            <person name="Potier S."/>
            <person name="Purnelle B."/>
            <person name="Rieger M."/>
            <person name="Riles L."/>
            <person name="Rinaldi T."/>
            <person name="Robben J."/>
            <person name="Rodrigues-Pousada C."/>
            <person name="Rodriguez-Belmonte E."/>
            <person name="Rodriguez-Torres A.M."/>
            <person name="Rose M."/>
            <person name="Ruzzi M."/>
            <person name="Saliola M."/>
            <person name="Sanchez-Perez M."/>
            <person name="Schaefer B."/>
            <person name="Schaefer M."/>
            <person name="Scharfe M."/>
            <person name="Schmidheini T."/>
            <person name="Schreer A."/>
            <person name="Skala J."/>
            <person name="Souciet J.-L."/>
            <person name="Steensma H.Y."/>
            <person name="Talla E."/>
            <person name="Thierry A."/>
            <person name="Vandenbol M."/>
            <person name="van der Aart Q.J.M."/>
            <person name="Van Dyck L."/>
            <person name="Vanoni M."/>
            <person name="Verhasselt P."/>
            <person name="Voet M."/>
            <person name="Volckaert G."/>
            <person name="Wambutt R."/>
            <person name="Watson M.D."/>
            <person name="Weber N."/>
            <person name="Wedler E."/>
            <person name="Wedler H."/>
            <person name="Wipfli P."/>
            <person name="Wolf K."/>
            <person name="Wright L.F."/>
            <person name="Zaccaria P."/>
            <person name="Zimmermann M."/>
            <person name="Zollner A."/>
            <person name="Kleine K."/>
        </authorList>
    </citation>
    <scope>NUCLEOTIDE SEQUENCE [LARGE SCALE GENOMIC DNA]</scope>
    <source>
        <strain>ATCC 204508 / S288c</strain>
    </source>
</reference>
<reference key="4">
    <citation type="journal article" date="2014" name="G3 (Bethesda)">
        <title>The reference genome sequence of Saccharomyces cerevisiae: Then and now.</title>
        <authorList>
            <person name="Engel S.R."/>
            <person name="Dietrich F.S."/>
            <person name="Fisk D.G."/>
            <person name="Binkley G."/>
            <person name="Balakrishnan R."/>
            <person name="Costanzo M.C."/>
            <person name="Dwight S.S."/>
            <person name="Hitz B.C."/>
            <person name="Karra K."/>
            <person name="Nash R.S."/>
            <person name="Weng S."/>
            <person name="Wong E.D."/>
            <person name="Lloyd P."/>
            <person name="Skrzypek M.S."/>
            <person name="Miyasato S.R."/>
            <person name="Simison M."/>
            <person name="Cherry J.M."/>
        </authorList>
    </citation>
    <scope>GENOME REANNOTATION</scope>
    <source>
        <strain>ATCC 204508 / S288c</strain>
    </source>
</reference>
<reference key="5">
    <citation type="submission" date="1994-07" db="EMBL/GenBank/DDBJ databases">
        <authorList>
            <person name="Miosga T."/>
        </authorList>
    </citation>
    <scope>NUCLEOTIDE SEQUENCE [GENOMIC DNA]</scope>
</reference>
<reference key="6">
    <citation type="journal article" date="2003" name="Proc. Natl. Acad. Sci. U.S.A.">
        <title>The proteome of Saccharomyces cerevisiae mitochondria.</title>
        <authorList>
            <person name="Sickmann A."/>
            <person name="Reinders J."/>
            <person name="Wagner Y."/>
            <person name="Joppich C."/>
            <person name="Zahedi R.P."/>
            <person name="Meyer H.E."/>
            <person name="Schoenfisch B."/>
            <person name="Perschil I."/>
            <person name="Chacinska A."/>
            <person name="Guiard B."/>
            <person name="Rehling P."/>
            <person name="Pfanner N."/>
            <person name="Meisinger C."/>
        </authorList>
    </citation>
    <scope>SUBCELLULAR LOCATION [LARGE SCALE ANALYSIS]</scope>
</reference>
<reference key="7">
    <citation type="journal article" date="2003" name="Nature">
        <title>Global analysis of protein expression in yeast.</title>
        <authorList>
            <person name="Ghaemmaghami S."/>
            <person name="Huh W.-K."/>
            <person name="Bower K."/>
            <person name="Howson R.W."/>
            <person name="Belle A."/>
            <person name="Dephoure N."/>
            <person name="O'Shea E.K."/>
            <person name="Weissman J.S."/>
        </authorList>
    </citation>
    <scope>LEVEL OF PROTEIN EXPRESSION [LARGE SCALE ANALYSIS]</scope>
</reference>
<reference key="8">
    <citation type="journal article" date="2007" name="Arch. Biochem. Biophys.">
        <title>Saccharomyces cerevisiae Coq9 polypeptide is a subunit of the mitochondrial coenzyme Q biosynthetic complex.</title>
        <authorList>
            <person name="Hsieh E.J."/>
            <person name="Gin P."/>
            <person name="Gulmezian M."/>
            <person name="Tran U.C."/>
            <person name="Saiki R."/>
            <person name="Marbois B.N."/>
            <person name="Clarke C.F."/>
        </authorList>
    </citation>
    <scope>IDENTIFICATION IN COQ ENZYME COMPLEX</scope>
    <scope>INTERACTION WITH COQ9</scope>
</reference>
<reference key="9">
    <citation type="journal article" date="2011" name="Chem. Biol.">
        <title>Coenzyme Q biosynthesis: Coq6 is required for the C5-hydroxylation reaction and substrate analogs rescue Coq6 deficiency.</title>
        <authorList>
            <person name="Ozeir M."/>
            <person name="Muhlenhoff U."/>
            <person name="Webert H."/>
            <person name="Lill R."/>
            <person name="Fontecave M."/>
            <person name="Pierrel F."/>
        </authorList>
    </citation>
    <scope>FUNCTION</scope>
    <scope>CATALYTIC ACTIVITY</scope>
    <scope>MUTAGENESIS OF GLY-202; GLY-386 AND ASN-388</scope>
</reference>
<reference key="10">
    <citation type="journal article" date="2014" name="Biochim. Biophys. Acta">
        <title>Coenzyme Q supplementation or over-expression of the yeast Coq8 putative kinase stabilizes multi-subunit Coq polypeptide complexes in yeast coq null mutants.</title>
        <authorList>
            <person name="He C.H."/>
            <person name="Xie L.X."/>
            <person name="Allan C.M."/>
            <person name="Tran U.C."/>
            <person name="Clarke C.F."/>
        </authorList>
    </citation>
    <scope>SUBUNIT</scope>
</reference>
<reference key="11">
    <citation type="journal article" date="2015" name="J. Biol. Chem.">
        <title>Coq6 is responsible for the C4-deamination reaction in coenzyme Q biosynthesis in Saccharomyces cerevisiae.</title>
        <authorList>
            <person name="Ozeir M."/>
            <person name="Pelosi L."/>
            <person name="Ismail A."/>
            <person name="Mellot-Draznieks C."/>
            <person name="Fontecave M."/>
            <person name="Pierrel F."/>
        </authorList>
    </citation>
    <scope>FUNCTION</scope>
    <scope>CATALYTIC ACTIVITY</scope>
</reference>
<reference key="12">
    <citation type="journal article" date="2016" name="PLoS Comput. Biol.">
        <title>Coenzyme Q biosynthesis: evidence for a substrate access channel in the FAD-dependent monooxygenase Coq6.</title>
        <authorList>
            <person name="Ismail A."/>
            <person name="Leroux V."/>
            <person name="Smadja M."/>
            <person name="Gonzalez L."/>
            <person name="Lombard M."/>
            <person name="Pierrel F."/>
            <person name="Mellot-Draznieks C."/>
            <person name="Fontecave M."/>
        </authorList>
    </citation>
    <scope>FUNCTION</scope>
    <scope>COFACTOR</scope>
    <scope>MUTAGENESIS OF GLY-248 AND LEU-382</scope>
</reference>
<evidence type="ECO:0000255" key="1">
    <source>
        <dbReference type="HAMAP-Rule" id="MF_03193"/>
    </source>
</evidence>
<evidence type="ECO:0000269" key="2">
    <source>
    </source>
</evidence>
<evidence type="ECO:0000269" key="3">
    <source>
    </source>
</evidence>
<evidence type="ECO:0000269" key="4">
    <source>
    </source>
</evidence>
<evidence type="ECO:0000269" key="5">
    <source>
    </source>
</evidence>
<evidence type="ECO:0000269" key="6">
    <source>
    </source>
</evidence>
<evidence type="ECO:0000269" key="7">
    <source>
    </source>
</evidence>
<evidence type="ECO:0000269" key="8">
    <source>
    </source>
</evidence>
<evidence type="ECO:0000269" key="9">
    <source>
    </source>
</evidence>
<evidence type="ECO:0000303" key="10">
    <source>
    </source>
</evidence>
<evidence type="ECO:0000303" key="11">
    <source>
    </source>
</evidence>
<evidence type="ECO:0000305" key="12"/>
<evidence type="ECO:0000305" key="13">
    <source>
    </source>
</evidence>
<evidence type="ECO:0000305" key="14">
    <source>
    </source>
</evidence>
<evidence type="ECO:0000305" key="15">
    <source>
    </source>
</evidence>
<evidence type="ECO:0000312" key="16">
    <source>
        <dbReference type="SGD" id="S000003487"/>
    </source>
</evidence>
<comment type="function">
    <text evidence="1 6 8">FAD-dependent monooxygenase required for two non-consecutive steps during ubiquinone biosynthesis. Required for the C5-ring hydroxylation during ubiquinone biosynthesis by catalyzing the hydroxylation of 4-hydroxy-3-(all-trans-hexaprenyl)benzoic acid to 3,4-dihydroxy-5-(all-trans-hexaprenyl)benzoic acid (PubMed:21944752). Also acts downstream of COQ4, for the C1-hydroxylation during ubiquinone biosynthesis by catalyzing the hydroxylation of 2-methoxy-6-(all-trans-hexaprenyl)phenol to 2-methoxy-6-(all-trans-hexaprenyl)benzene-1,4-diol. The electrons required for the hydroxylation reaction are funneled indirectly from NADPH via ferredoxin (YAH1) and ferredoxin reductase (ARH1) to COQ6 (PubMed:21944752). Can also convert 3-hexaprenyl-4-aminobenzoic acid (HAB), a COQ2-prenylated pABA, to DHHB in a two step process (PubMed:26260787). HAB is first hydroxylated at C5 to yield 3-hexaprenyl-4-amino-5-hydroxybenzoic acid (HHAB) which is further deaminated at C4 by COQ6 to produce DHHB (PubMed:26260787).</text>
</comment>
<comment type="catalytic activity">
    <reaction evidence="1 6">
        <text>4-hydroxy-3-(all-trans-hexaprenyl)benzoate + 2 reduced [2Fe-2S]-[ferredoxin] + O2 + 2 H(+) = 3,4-dihydroxy-5-(all-trans-hexaprenyl)benzoate + 2 oxidized [2Fe-2S]-[ferredoxin] + H2O</text>
        <dbReference type="Rhea" id="RHEA:20361"/>
        <dbReference type="Rhea" id="RHEA-COMP:10000"/>
        <dbReference type="Rhea" id="RHEA-COMP:10001"/>
        <dbReference type="ChEBI" id="CHEBI:15377"/>
        <dbReference type="ChEBI" id="CHEBI:15378"/>
        <dbReference type="ChEBI" id="CHEBI:15379"/>
        <dbReference type="ChEBI" id="CHEBI:33737"/>
        <dbReference type="ChEBI" id="CHEBI:33738"/>
        <dbReference type="ChEBI" id="CHEBI:58373"/>
        <dbReference type="ChEBI" id="CHEBI:84492"/>
        <dbReference type="EC" id="1.14.15.45"/>
    </reaction>
</comment>
<comment type="catalytic activity">
    <reaction evidence="1">
        <text>2-methoxy-6-(all-trans-hexaprenyl)phenol + 2 reduced [2Fe-2S]-[ferredoxin] + O2 + 2 H(+) = 2-methoxy-6-(all-trans-hexaprenyl)benzene-1,4-diol + 2 oxidized [2Fe-2S]-[ferredoxin] + H2O</text>
        <dbReference type="Rhea" id="RHEA:81279"/>
        <dbReference type="Rhea" id="RHEA-COMP:10000"/>
        <dbReference type="Rhea" id="RHEA-COMP:10001"/>
        <dbReference type="ChEBI" id="CHEBI:1109"/>
        <dbReference type="ChEBI" id="CHEBI:15377"/>
        <dbReference type="ChEBI" id="CHEBI:15378"/>
        <dbReference type="ChEBI" id="CHEBI:15379"/>
        <dbReference type="ChEBI" id="CHEBI:33737"/>
        <dbReference type="ChEBI" id="CHEBI:33738"/>
        <dbReference type="ChEBI" id="CHEBI:61472"/>
        <dbReference type="EC" id="1.14.15.46"/>
    </reaction>
</comment>
<comment type="catalytic activity">
    <reaction evidence="1 8">
        <text>4-amino-3-(all-trans-hexaprenyl)benzoate + 2 reduced [2Fe-2S]-[ferredoxin] + O2 + 2 H(+) = 4-amino-5-hydroxy-3-(all-trans-hexaprenyl)benzoate + 2 oxidized [2Fe-2S]-[ferredoxin] + H2O</text>
        <dbReference type="Rhea" id="RHEA:58392"/>
        <dbReference type="Rhea" id="RHEA-COMP:10000"/>
        <dbReference type="Rhea" id="RHEA-COMP:10001"/>
        <dbReference type="ChEBI" id="CHEBI:15377"/>
        <dbReference type="ChEBI" id="CHEBI:15378"/>
        <dbReference type="ChEBI" id="CHEBI:15379"/>
        <dbReference type="ChEBI" id="CHEBI:33737"/>
        <dbReference type="ChEBI" id="CHEBI:33738"/>
        <dbReference type="ChEBI" id="CHEBI:142618"/>
        <dbReference type="ChEBI" id="CHEBI:142619"/>
    </reaction>
</comment>
<comment type="catalytic activity">
    <reaction evidence="1 8">
        <text>4-amino-5-hydroxy-3-(all-trans-hexaprenyl)benzoate + 4 reduced [2Fe-2S]-[ferredoxin] + O2 + 5 H(+) = 3,4-dihydroxy-5-(all-trans-hexaprenyl)benzoate + 4 oxidized [2Fe-2S]-[ferredoxin] + NH4(+) + H2O</text>
        <dbReference type="Rhea" id="RHEA:58396"/>
        <dbReference type="Rhea" id="RHEA-COMP:10000"/>
        <dbReference type="Rhea" id="RHEA-COMP:10001"/>
        <dbReference type="ChEBI" id="CHEBI:15377"/>
        <dbReference type="ChEBI" id="CHEBI:15378"/>
        <dbReference type="ChEBI" id="CHEBI:15379"/>
        <dbReference type="ChEBI" id="CHEBI:28938"/>
        <dbReference type="ChEBI" id="CHEBI:33737"/>
        <dbReference type="ChEBI" id="CHEBI:33738"/>
        <dbReference type="ChEBI" id="CHEBI:58373"/>
        <dbReference type="ChEBI" id="CHEBI:142619"/>
    </reaction>
</comment>
<comment type="cofactor">
    <cofactor evidence="1 9">
        <name>FAD</name>
        <dbReference type="ChEBI" id="CHEBI:57692"/>
    </cofactor>
</comment>
<comment type="pathway">
    <text evidence="1 13 14">Cofactor biosynthesis; ubiquinone biosynthesis.</text>
</comment>
<comment type="subunit">
    <text evidence="1 5 7">Component of a multi-subunit COQ enzyme complex, composed of at least COQ3, COQ4, COQ5, COQ6, COQ7 and COQ9.</text>
</comment>
<comment type="subcellular location">
    <subcellularLocation>
        <location evidence="1 2 4">Mitochondrion inner membrane</location>
        <topology evidence="1 2">Peripheral membrane protein</topology>
        <orientation evidence="1 2">Matrix side</orientation>
    </subcellularLocation>
</comment>
<comment type="miscellaneous">
    <text evidence="3">Present with 2940 molecules/cell in log phase SD medium.</text>
</comment>
<comment type="similarity">
    <text evidence="1 12">Belongs to the UbiH/COQ6 family.</text>
</comment>
<comment type="caution">
    <text evidence="15">Based on current literature, utilization of para-aminobenzoic acid (pABA) involving C4-deamination seems not to occur in bacteria, plants and mammals where only C5 hydroxylation of HHB has been shown, even if human COQ6 is able to perform the deamination reaction in the absence of COQ9.</text>
</comment>
<comment type="sequence caution" evidence="12">
    <conflict type="frameshift">
        <sequence resource="EMBL-CDS" id="CAA56704"/>
    </conflict>
</comment>